<gene>
    <name type="primary">CD4</name>
</gene>
<sequence>VVLGKKGDTVELTCNASQKTTTQFHWKNSNQMKILGKQGSFLTKGPSKLRDRTDSRKSLWDQGCFSMIIKNLKIEDSETYICEVEDKKEEVELLVFGLTANSDTHLLQGQSLTLTLESPPGSSPSVKCRSPRGKNIQGGRTLSVPQLERQDSGTWTCTVSQDQNTVEFKIDIVVLAFQKASSTVYKKEGEQVEFSFPLAFTLEKLTGSGELWWQAERASSSKSWITFDLKNKEVSVKRVTQDPKLQMGEKLPLHLTLPQALPHYAGSGNLTLALEAKTGKLHQEVNLVVMRATQFQENLTCEVWGPTSPKLTLSLKLENKEATISKQAKAVWVLNPEEGMWQCLLSDSGQVLLESNIKVLPTWPTPVQPMALIVLGGVAGLLLFTGLGIFFCVRCRH</sequence>
<organism>
    <name type="scientific">Erythrocebus patas</name>
    <name type="common">Red guenon</name>
    <name type="synonym">Cercopithecus patas</name>
    <dbReference type="NCBI Taxonomy" id="9538"/>
    <lineage>
        <taxon>Eukaryota</taxon>
        <taxon>Metazoa</taxon>
        <taxon>Chordata</taxon>
        <taxon>Craniata</taxon>
        <taxon>Vertebrata</taxon>
        <taxon>Euteleostomi</taxon>
        <taxon>Mammalia</taxon>
        <taxon>Eutheria</taxon>
        <taxon>Euarchontoglires</taxon>
        <taxon>Primates</taxon>
        <taxon>Haplorrhini</taxon>
        <taxon>Catarrhini</taxon>
        <taxon>Cercopithecidae</taxon>
        <taxon>Cercopithecinae</taxon>
        <taxon>Erythrocebus</taxon>
    </lineage>
</organism>
<name>CD4_ERYPA</name>
<accession>Q08339</accession>
<comment type="function">
    <text evidence="2">Integral membrane glycoprotein that plays an essential role in the immune response and serves multiple functions in responses against both external and internal offenses. In T-cells, functions primarily as a coreceptor for MHC class II molecule:peptide complex. The antigens presented by class II peptides are derived from extracellular proteins while class I peptides are derived from cytosolic proteins. Interacts simultaneously with the T-cell receptor (TCR) and the MHC class II presented by antigen presenting cells (APCs). In turn, recruits the Src kinase LCK to the vicinity of the TCR-CD3 complex. LCK then initiates different intracellular signaling pathways by phosphorylating various substrates ultimately leading to lymphokine production, motility, adhesion and activation of T-helper cells. In other cells such as macrophages or NK cells, plays a role in differentiation/activation, cytokine expression and cell migration in a TCR/LCK-independent pathway. Participates in the development of T-helper cells in the thymus and triggers the differentiation of monocytes into functional mature macrophages.</text>
</comment>
<comment type="subunit">
    <text evidence="2">Forms disulfide-linked homodimers at the cell surface. Interacts with LCK. Interacts with PTK2/FAK1. Binds to P4HB/PDI. Interacts with IL16; this interaction induces a CD4-dependent signaling in lymphocytes. Interacts (via Ig-like V-type domain) with MHCII alpha chain (via alpha-2 domain) and beta chain (via beta-2 domain); this interaction increases the affinity of TCR for peptide-MHCII. CD4 oligomerization via Ig-like C2-type 2 and 3 domains appears to be required for stable binding to MHCII and adhesion between T cells and APCs.</text>
</comment>
<comment type="subcellular location">
    <subcellularLocation>
        <location evidence="2">Cell membrane</location>
        <topology evidence="2">Single-pass type I membrane protein</topology>
    </subcellularLocation>
    <text evidence="2">Localizes to lipid rafts.</text>
</comment>
<comment type="domain">
    <text evidence="2">The Ig-like V-type domain mediates the interaction with MHCII.</text>
</comment>
<comment type="PTM">
    <text evidence="2">Palmitoylation and association with LCK contribute to the enrichment of CD4 in lipid rafts.</text>
</comment>
<comment type="PTM">
    <text evidence="2">Phosphorylated by PKC; phosphorylation plays an important role for CD4 internalization.</text>
</comment>
<feature type="chain" id="PRO_0000072674" description="T-cell surface glycoprotein CD4">
    <location>
        <begin position="1" status="less than"/>
        <end position="397" status="greater than"/>
    </location>
</feature>
<feature type="topological domain" description="Extracellular" evidence="3">
    <location>
        <begin position="1" status="less than"/>
        <end position="369"/>
    </location>
</feature>
<feature type="transmembrane region" description="Helical" evidence="3">
    <location>
        <begin position="370"/>
        <end position="391"/>
    </location>
</feature>
<feature type="topological domain" description="Cytoplasmic" evidence="3">
    <location>
        <begin position="392"/>
        <end position="397" status="greater than"/>
    </location>
</feature>
<feature type="domain" description="Ig-like V-type">
    <location>
        <begin position="1" status="less than"/>
        <end position="98"/>
    </location>
</feature>
<feature type="domain" description="Ig-like C2-type 1">
    <location>
        <begin position="99"/>
        <end position="176"/>
    </location>
</feature>
<feature type="domain" description="Ig-like C2-type 2">
    <location>
        <begin position="177"/>
        <end position="290"/>
    </location>
</feature>
<feature type="domain" description="Ig-like C2-type 3">
    <location>
        <begin position="291"/>
        <end position="347"/>
    </location>
</feature>
<feature type="lipid moiety-binding region" description="S-palmitoyl cysteine" evidence="1">
    <location>
        <position position="392"/>
    </location>
</feature>
<feature type="lipid moiety-binding region" description="S-palmitoyl cysteine" evidence="1">
    <location>
        <position position="395"/>
    </location>
</feature>
<feature type="glycosylation site" description="N-linked (GlcNAc...) asparagine" evidence="1">
    <location>
        <position position="269"/>
    </location>
</feature>
<feature type="glycosylation site" description="N-linked (GlcNAc...) asparagine" evidence="1">
    <location>
        <position position="298"/>
    </location>
</feature>
<feature type="disulfide bond" evidence="4">
    <location>
        <begin position="14"/>
        <end position="82"/>
    </location>
</feature>
<feature type="disulfide bond" evidence="4">
    <location>
        <begin position="128"/>
        <end position="157"/>
    </location>
</feature>
<feature type="disulfide bond" evidence="4">
    <location>
        <begin position="301"/>
        <end position="343"/>
    </location>
</feature>
<feature type="non-terminal residue">
    <location>
        <position position="1"/>
    </location>
</feature>
<feature type="non-terminal residue">
    <location>
        <position position="397"/>
    </location>
</feature>
<dbReference type="EMBL" id="X73324">
    <property type="protein sequence ID" value="CAA51750.1"/>
    <property type="molecule type" value="mRNA"/>
</dbReference>
<dbReference type="SMR" id="Q08339"/>
<dbReference type="GlyCosmos" id="Q08339">
    <property type="glycosylation" value="2 sites, No reported glycans"/>
</dbReference>
<dbReference type="GO" id="GO:0009986">
    <property type="term" value="C:cell surface"/>
    <property type="evidence" value="ECO:0007669"/>
    <property type="project" value="UniProtKB-ARBA"/>
</dbReference>
<dbReference type="GO" id="GO:0005886">
    <property type="term" value="C:plasma membrane"/>
    <property type="evidence" value="ECO:0007669"/>
    <property type="project" value="UniProtKB-SubCell"/>
</dbReference>
<dbReference type="GO" id="GO:0015026">
    <property type="term" value="F:coreceptor activity"/>
    <property type="evidence" value="ECO:0007669"/>
    <property type="project" value="InterPro"/>
</dbReference>
<dbReference type="GO" id="GO:0023026">
    <property type="term" value="F:MHC class II protein complex binding"/>
    <property type="evidence" value="ECO:0000250"/>
    <property type="project" value="UniProtKB"/>
</dbReference>
<dbReference type="GO" id="GO:0002250">
    <property type="term" value="P:adaptive immune response"/>
    <property type="evidence" value="ECO:0007669"/>
    <property type="project" value="UniProtKB-KW"/>
</dbReference>
<dbReference type="GO" id="GO:0007155">
    <property type="term" value="P:cell adhesion"/>
    <property type="evidence" value="ECO:0007669"/>
    <property type="project" value="InterPro"/>
</dbReference>
<dbReference type="GO" id="GO:0030217">
    <property type="term" value="P:T cell differentiation"/>
    <property type="evidence" value="ECO:0000250"/>
    <property type="project" value="UniProtKB"/>
</dbReference>
<dbReference type="GO" id="GO:0045058">
    <property type="term" value="P:T cell selection"/>
    <property type="evidence" value="ECO:0000250"/>
    <property type="project" value="UniProtKB"/>
</dbReference>
<dbReference type="CDD" id="cd07695">
    <property type="entry name" value="IgV_3_CD4"/>
    <property type="match status" value="1"/>
</dbReference>
<dbReference type="FunFam" id="2.60.40.10:FF:001105">
    <property type="entry name" value="T-cell surface glycoprotein CD4"/>
    <property type="match status" value="1"/>
</dbReference>
<dbReference type="FunFam" id="2.60.40.10:FF:001204">
    <property type="entry name" value="T-cell surface glycoprotein CD4"/>
    <property type="match status" value="1"/>
</dbReference>
<dbReference type="FunFam" id="2.60.40.10:FF:001221">
    <property type="entry name" value="T-cell surface glycoprotein CD4"/>
    <property type="match status" value="1"/>
</dbReference>
<dbReference type="FunFam" id="2.60.40.10:FF:001253">
    <property type="entry name" value="T-cell surface glycoprotein CD4"/>
    <property type="match status" value="1"/>
</dbReference>
<dbReference type="Gene3D" id="2.60.40.10">
    <property type="entry name" value="Immunoglobulins"/>
    <property type="match status" value="4"/>
</dbReference>
<dbReference type="Gene3D" id="1.20.5.900">
    <property type="entry name" value="transmembrane domain of human cd4"/>
    <property type="match status" value="1"/>
</dbReference>
<dbReference type="InterPro" id="IPR000973">
    <property type="entry name" value="CD4"/>
</dbReference>
<dbReference type="InterPro" id="IPR015274">
    <property type="entry name" value="CD4-extracel"/>
</dbReference>
<dbReference type="InterPro" id="IPR007110">
    <property type="entry name" value="Ig-like_dom"/>
</dbReference>
<dbReference type="InterPro" id="IPR036179">
    <property type="entry name" value="Ig-like_dom_sf"/>
</dbReference>
<dbReference type="InterPro" id="IPR013783">
    <property type="entry name" value="Ig-like_fold"/>
</dbReference>
<dbReference type="InterPro" id="IPR008424">
    <property type="entry name" value="Ig_C2-set"/>
</dbReference>
<dbReference type="InterPro" id="IPR003599">
    <property type="entry name" value="Ig_sub"/>
</dbReference>
<dbReference type="InterPro" id="IPR003598">
    <property type="entry name" value="Ig_sub2"/>
</dbReference>
<dbReference type="InterPro" id="IPR013106">
    <property type="entry name" value="Ig_V-set"/>
</dbReference>
<dbReference type="InterPro" id="IPR013151">
    <property type="entry name" value="Immunoglobulin_dom"/>
</dbReference>
<dbReference type="PANTHER" id="PTHR11422">
    <property type="entry name" value="T-CELL SURFACE GLYCOPROTEIN CD4"/>
    <property type="match status" value="1"/>
</dbReference>
<dbReference type="PANTHER" id="PTHR11422:SF0">
    <property type="entry name" value="T-CELL SURFACE GLYCOPROTEIN CD4"/>
    <property type="match status" value="1"/>
</dbReference>
<dbReference type="Pfam" id="PF05790">
    <property type="entry name" value="C2-set"/>
    <property type="match status" value="2"/>
</dbReference>
<dbReference type="Pfam" id="PF09191">
    <property type="entry name" value="CD4-extracel"/>
    <property type="match status" value="1"/>
</dbReference>
<dbReference type="Pfam" id="PF00047">
    <property type="entry name" value="ig"/>
    <property type="match status" value="1"/>
</dbReference>
<dbReference type="PRINTS" id="PR00692">
    <property type="entry name" value="CD4TCANTIGEN"/>
</dbReference>
<dbReference type="SMART" id="SM00409">
    <property type="entry name" value="IG"/>
    <property type="match status" value="3"/>
</dbReference>
<dbReference type="SMART" id="SM00408">
    <property type="entry name" value="IGc2"/>
    <property type="match status" value="2"/>
</dbReference>
<dbReference type="SMART" id="SM00406">
    <property type="entry name" value="IGv"/>
    <property type="match status" value="1"/>
</dbReference>
<dbReference type="SUPFAM" id="SSF48726">
    <property type="entry name" value="Immunoglobulin"/>
    <property type="match status" value="4"/>
</dbReference>
<dbReference type="PROSITE" id="PS50835">
    <property type="entry name" value="IG_LIKE"/>
    <property type="match status" value="1"/>
</dbReference>
<proteinExistence type="evidence at transcript level"/>
<keyword id="KW-1064">Adaptive immunity</keyword>
<keyword id="KW-1003">Cell membrane</keyword>
<keyword id="KW-1015">Disulfide bond</keyword>
<keyword id="KW-0325">Glycoprotein</keyword>
<keyword id="KW-0391">Immunity</keyword>
<keyword id="KW-0393">Immunoglobulin domain</keyword>
<keyword id="KW-0449">Lipoprotein</keyword>
<keyword id="KW-0472">Membrane</keyword>
<keyword id="KW-0564">Palmitate</keyword>
<keyword id="KW-0677">Repeat</keyword>
<keyword id="KW-0812">Transmembrane</keyword>
<keyword id="KW-1133">Transmembrane helix</keyword>
<reference key="1">
    <citation type="journal article" date="1992" name="Eur. J. Immunol.">
        <title>Cloning and sequences of primate CD4 molecules: diversity of the cellular receptor for simian immunodeficiency virus/human immunodeficiency virus.</title>
        <authorList>
            <person name="Fomsgaard A."/>
            <person name="Hirsch V.M."/>
            <person name="Johnson P.R."/>
        </authorList>
    </citation>
    <scope>NUCLEOTIDE SEQUENCE [MRNA]</scope>
    <source>
        <tissue>Blood</tissue>
    </source>
</reference>
<evidence type="ECO:0000250" key="1"/>
<evidence type="ECO:0000250" key="2">
    <source>
        <dbReference type="UniProtKB" id="P01730"/>
    </source>
</evidence>
<evidence type="ECO:0000255" key="3"/>
<evidence type="ECO:0000255" key="4">
    <source>
        <dbReference type="PROSITE-ProRule" id="PRU00114"/>
    </source>
</evidence>
<protein>
    <recommendedName>
        <fullName>T-cell surface glycoprotein CD4</fullName>
    </recommendedName>
    <alternativeName>
        <fullName>T-cell surface antigen T4/Leu-3</fullName>
    </alternativeName>
    <cdAntigenName>CD4</cdAntigenName>
</protein>